<gene>
    <name evidence="1" type="primary">fabZ</name>
    <name type="ordered locus">RT0007</name>
</gene>
<name>FABZ_RICTY</name>
<protein>
    <recommendedName>
        <fullName evidence="1">3-hydroxyacyl-[acyl-carrier-protein] dehydratase FabZ</fullName>
        <ecNumber evidence="1">4.2.1.59</ecNumber>
    </recommendedName>
    <alternativeName>
        <fullName evidence="1">(3R)-hydroxymyristoyl-[acyl-carrier-protein] dehydratase</fullName>
        <shortName evidence="1">(3R)-hydroxymyristoyl-ACP dehydrase</shortName>
    </alternativeName>
    <alternativeName>
        <fullName evidence="1">Beta-hydroxyacyl-ACP dehydratase</fullName>
    </alternativeName>
</protein>
<feature type="chain" id="PRO_0000091723" description="3-hydroxyacyl-[acyl-carrier-protein] dehydratase FabZ">
    <location>
        <begin position="1"/>
        <end position="145"/>
    </location>
</feature>
<feature type="active site" evidence="1">
    <location>
        <position position="49"/>
    </location>
</feature>
<organism>
    <name type="scientific">Rickettsia typhi (strain ATCC VR-144 / Wilmington)</name>
    <dbReference type="NCBI Taxonomy" id="257363"/>
    <lineage>
        <taxon>Bacteria</taxon>
        <taxon>Pseudomonadati</taxon>
        <taxon>Pseudomonadota</taxon>
        <taxon>Alphaproteobacteria</taxon>
        <taxon>Rickettsiales</taxon>
        <taxon>Rickettsiaceae</taxon>
        <taxon>Rickettsieae</taxon>
        <taxon>Rickettsia</taxon>
        <taxon>typhus group</taxon>
    </lineage>
</organism>
<evidence type="ECO:0000255" key="1">
    <source>
        <dbReference type="HAMAP-Rule" id="MF_00406"/>
    </source>
</evidence>
<keyword id="KW-0963">Cytoplasm</keyword>
<keyword id="KW-0441">Lipid A biosynthesis</keyword>
<keyword id="KW-0444">Lipid biosynthesis</keyword>
<keyword id="KW-0443">Lipid metabolism</keyword>
<keyword id="KW-0456">Lyase</keyword>
<accession>Q68XZ5</accession>
<proteinExistence type="inferred from homology"/>
<comment type="function">
    <text evidence="1">Involved in unsaturated fatty acids biosynthesis. Catalyzes the dehydration of short chain beta-hydroxyacyl-ACPs and long chain saturated and unsaturated beta-hydroxyacyl-ACPs.</text>
</comment>
<comment type="catalytic activity">
    <reaction evidence="1">
        <text>a (3R)-hydroxyacyl-[ACP] = a (2E)-enoyl-[ACP] + H2O</text>
        <dbReference type="Rhea" id="RHEA:13097"/>
        <dbReference type="Rhea" id="RHEA-COMP:9925"/>
        <dbReference type="Rhea" id="RHEA-COMP:9945"/>
        <dbReference type="ChEBI" id="CHEBI:15377"/>
        <dbReference type="ChEBI" id="CHEBI:78784"/>
        <dbReference type="ChEBI" id="CHEBI:78827"/>
        <dbReference type="EC" id="4.2.1.59"/>
    </reaction>
</comment>
<comment type="subcellular location">
    <subcellularLocation>
        <location evidence="1">Cytoplasm</location>
    </subcellularLocation>
</comment>
<comment type="similarity">
    <text evidence="1">Belongs to the thioester dehydratase family. FabZ subfamily.</text>
</comment>
<sequence>MIIAITEIMDLIPHRYPFLLVDRVLKIDPNKSITGIKNVTVNEPQFTGHFPTRPVMPGVLMVESMAQLAAILVAKSLDSTKNKEVFLMSIENTKFRRIVQPGDTMHIHSVIDQQRANVWKFSSKVMVECEIAAESKFTAMIKDKM</sequence>
<reference key="1">
    <citation type="journal article" date="2004" name="J. Bacteriol.">
        <title>Complete genome sequence of Rickettsia typhi and comparison with sequences of other Rickettsiae.</title>
        <authorList>
            <person name="McLeod M.P."/>
            <person name="Qin X."/>
            <person name="Karpathy S.E."/>
            <person name="Gioia J."/>
            <person name="Highlander S.K."/>
            <person name="Fox G.E."/>
            <person name="McNeill T.Z."/>
            <person name="Jiang H."/>
            <person name="Muzny D."/>
            <person name="Jacob L.S."/>
            <person name="Hawes A.C."/>
            <person name="Sodergren E."/>
            <person name="Gill R."/>
            <person name="Hume J."/>
            <person name="Morgan M."/>
            <person name="Fan G."/>
            <person name="Amin A.G."/>
            <person name="Gibbs R.A."/>
            <person name="Hong C."/>
            <person name="Yu X.-J."/>
            <person name="Walker D.H."/>
            <person name="Weinstock G.M."/>
        </authorList>
    </citation>
    <scope>NUCLEOTIDE SEQUENCE [LARGE SCALE GENOMIC DNA]</scope>
    <source>
        <strain>ATCC VR-144 / Wilmington</strain>
    </source>
</reference>
<dbReference type="EC" id="4.2.1.59" evidence="1"/>
<dbReference type="EMBL" id="AE017197">
    <property type="protein sequence ID" value="AAU03497.1"/>
    <property type="molecule type" value="Genomic_DNA"/>
</dbReference>
<dbReference type="RefSeq" id="WP_011190484.1">
    <property type="nucleotide sequence ID" value="NC_006142.1"/>
</dbReference>
<dbReference type="SMR" id="Q68XZ5"/>
<dbReference type="KEGG" id="rty:RT0007"/>
<dbReference type="eggNOG" id="COG0764">
    <property type="taxonomic scope" value="Bacteria"/>
</dbReference>
<dbReference type="HOGENOM" id="CLU_078912_1_2_5"/>
<dbReference type="OrthoDB" id="9772788at2"/>
<dbReference type="Proteomes" id="UP000000604">
    <property type="component" value="Chromosome"/>
</dbReference>
<dbReference type="GO" id="GO:0005737">
    <property type="term" value="C:cytoplasm"/>
    <property type="evidence" value="ECO:0007669"/>
    <property type="project" value="UniProtKB-SubCell"/>
</dbReference>
<dbReference type="GO" id="GO:0016020">
    <property type="term" value="C:membrane"/>
    <property type="evidence" value="ECO:0007669"/>
    <property type="project" value="GOC"/>
</dbReference>
<dbReference type="GO" id="GO:0019171">
    <property type="term" value="F:(3R)-hydroxyacyl-[acyl-carrier-protein] dehydratase activity"/>
    <property type="evidence" value="ECO:0007669"/>
    <property type="project" value="UniProtKB-EC"/>
</dbReference>
<dbReference type="GO" id="GO:0006633">
    <property type="term" value="P:fatty acid biosynthetic process"/>
    <property type="evidence" value="ECO:0007669"/>
    <property type="project" value="UniProtKB-UniRule"/>
</dbReference>
<dbReference type="GO" id="GO:0009245">
    <property type="term" value="P:lipid A biosynthetic process"/>
    <property type="evidence" value="ECO:0007669"/>
    <property type="project" value="UniProtKB-UniRule"/>
</dbReference>
<dbReference type="CDD" id="cd01288">
    <property type="entry name" value="FabZ"/>
    <property type="match status" value="1"/>
</dbReference>
<dbReference type="FunFam" id="3.10.129.10:FF:000001">
    <property type="entry name" value="3-hydroxyacyl-[acyl-carrier-protein] dehydratase FabZ"/>
    <property type="match status" value="1"/>
</dbReference>
<dbReference type="Gene3D" id="3.10.129.10">
    <property type="entry name" value="Hotdog Thioesterase"/>
    <property type="match status" value="1"/>
</dbReference>
<dbReference type="HAMAP" id="MF_00406">
    <property type="entry name" value="FabZ"/>
    <property type="match status" value="1"/>
</dbReference>
<dbReference type="InterPro" id="IPR013114">
    <property type="entry name" value="FabA_FabZ"/>
</dbReference>
<dbReference type="InterPro" id="IPR010084">
    <property type="entry name" value="FabZ"/>
</dbReference>
<dbReference type="InterPro" id="IPR029069">
    <property type="entry name" value="HotDog_dom_sf"/>
</dbReference>
<dbReference type="NCBIfam" id="TIGR01750">
    <property type="entry name" value="fabZ"/>
    <property type="match status" value="1"/>
</dbReference>
<dbReference type="NCBIfam" id="NF000582">
    <property type="entry name" value="PRK00006.1"/>
    <property type="match status" value="1"/>
</dbReference>
<dbReference type="PANTHER" id="PTHR30272">
    <property type="entry name" value="3-HYDROXYACYL-[ACYL-CARRIER-PROTEIN] DEHYDRATASE"/>
    <property type="match status" value="1"/>
</dbReference>
<dbReference type="PANTHER" id="PTHR30272:SF1">
    <property type="entry name" value="3-HYDROXYACYL-[ACYL-CARRIER-PROTEIN] DEHYDRATASE"/>
    <property type="match status" value="1"/>
</dbReference>
<dbReference type="Pfam" id="PF07977">
    <property type="entry name" value="FabA"/>
    <property type="match status" value="1"/>
</dbReference>
<dbReference type="SUPFAM" id="SSF54637">
    <property type="entry name" value="Thioesterase/thiol ester dehydrase-isomerase"/>
    <property type="match status" value="1"/>
</dbReference>